<name>LPXK_BACFR</name>
<comment type="function">
    <text evidence="1">Transfers the gamma-phosphate of ATP to the 4'-position of a tetraacyldisaccharide 1-phosphate intermediate (termed DS-1-P) to form tetraacyldisaccharide 1,4'-bis-phosphate (lipid IVA).</text>
</comment>
<comment type="catalytic activity">
    <reaction evidence="1">
        <text>a lipid A disaccharide + ATP = a lipid IVA + ADP + H(+)</text>
        <dbReference type="Rhea" id="RHEA:67840"/>
        <dbReference type="ChEBI" id="CHEBI:15378"/>
        <dbReference type="ChEBI" id="CHEBI:30616"/>
        <dbReference type="ChEBI" id="CHEBI:176343"/>
        <dbReference type="ChEBI" id="CHEBI:176425"/>
        <dbReference type="ChEBI" id="CHEBI:456216"/>
        <dbReference type="EC" id="2.7.1.130"/>
    </reaction>
</comment>
<comment type="pathway">
    <text evidence="1">Glycolipid biosynthesis; lipid IV(A) biosynthesis; lipid IV(A) from (3R)-3-hydroxytetradecanoyl-[acyl-carrier-protein] and UDP-N-acetyl-alpha-D-glucosamine: step 6/6.</text>
</comment>
<comment type="similarity">
    <text evidence="1">Belongs to the LpxK family.</text>
</comment>
<evidence type="ECO:0000255" key="1">
    <source>
        <dbReference type="HAMAP-Rule" id="MF_00409"/>
    </source>
</evidence>
<organism>
    <name type="scientific">Bacteroides fragilis (strain YCH46)</name>
    <dbReference type="NCBI Taxonomy" id="295405"/>
    <lineage>
        <taxon>Bacteria</taxon>
        <taxon>Pseudomonadati</taxon>
        <taxon>Bacteroidota</taxon>
        <taxon>Bacteroidia</taxon>
        <taxon>Bacteroidales</taxon>
        <taxon>Bacteroidaceae</taxon>
        <taxon>Bacteroides</taxon>
    </lineage>
</organism>
<keyword id="KW-0067">ATP-binding</keyword>
<keyword id="KW-0418">Kinase</keyword>
<keyword id="KW-0441">Lipid A biosynthesis</keyword>
<keyword id="KW-0444">Lipid biosynthesis</keyword>
<keyword id="KW-0443">Lipid metabolism</keyword>
<keyword id="KW-0547">Nucleotide-binding</keyword>
<keyword id="KW-0808">Transferase</keyword>
<proteinExistence type="inferred from homology"/>
<protein>
    <recommendedName>
        <fullName evidence="1">Tetraacyldisaccharide 4'-kinase</fullName>
        <ecNumber evidence="1">2.7.1.130</ecNumber>
    </recommendedName>
    <alternativeName>
        <fullName evidence="1">Lipid A 4'-kinase</fullName>
    </alternativeName>
</protein>
<gene>
    <name evidence="1" type="primary">lpxK</name>
    <name type="ordered locus">BF3452</name>
</gene>
<sequence>MEENSIKIHKWLYPASWLYGAGVALRNKLFDWGKLQSKSFNVPIICIGNIAVGGTGKTPHTEYLIKLLHDEFQVAVLSRGYKRHTKGFVLSTAESDARSIGDEPYQIQSKFSDIRVAVDEDRCHGIERLLTLKEPPVEVILLDDAFQHRYVKAGLNILLTDYHRLFCDDTLMPAGRLRESAQGKNRAQIVIVTKCPPDIKPIDYNIITKRLNLFPYQQLYFSSFRYGNLRAVFPDCATVQERKLSSLQTEEQILLITGIASPDTIIRELEIHTRNIDLLAFSDHHNFSQRDLAQIKERFGKLRKGQRLIVTTEKDATRLICHQELDEGLKPFIYALPIEVEILQNQQDNFNQHIIGYVRENTRNGSLPERKDAHKS</sequence>
<reference key="1">
    <citation type="journal article" date="2004" name="Proc. Natl. Acad. Sci. U.S.A.">
        <title>Genomic analysis of Bacteroides fragilis reveals extensive DNA inversions regulating cell surface adaptation.</title>
        <authorList>
            <person name="Kuwahara T."/>
            <person name="Yamashita A."/>
            <person name="Hirakawa H."/>
            <person name="Nakayama H."/>
            <person name="Toh H."/>
            <person name="Okada N."/>
            <person name="Kuhara S."/>
            <person name="Hattori M."/>
            <person name="Hayashi T."/>
            <person name="Ohnishi Y."/>
        </authorList>
    </citation>
    <scope>NUCLEOTIDE SEQUENCE [LARGE SCALE GENOMIC DNA]</scope>
    <source>
        <strain>YCH46</strain>
    </source>
</reference>
<feature type="chain" id="PRO_0000340820" description="Tetraacyldisaccharide 4'-kinase">
    <location>
        <begin position="1"/>
        <end position="376"/>
    </location>
</feature>
<feature type="binding site" evidence="1">
    <location>
        <begin position="51"/>
        <end position="58"/>
    </location>
    <ligand>
        <name>ATP</name>
        <dbReference type="ChEBI" id="CHEBI:30616"/>
    </ligand>
</feature>
<dbReference type="EC" id="2.7.1.130" evidence="1"/>
<dbReference type="EMBL" id="AP006841">
    <property type="protein sequence ID" value="BAD50195.1"/>
    <property type="molecule type" value="Genomic_DNA"/>
</dbReference>
<dbReference type="RefSeq" id="WP_009292736.1">
    <property type="nucleotide sequence ID" value="NC_006347.1"/>
</dbReference>
<dbReference type="RefSeq" id="YP_100729.1">
    <property type="nucleotide sequence ID" value="NC_006347.1"/>
</dbReference>
<dbReference type="SMR" id="Q64QN6"/>
<dbReference type="STRING" id="295405.BF3452"/>
<dbReference type="KEGG" id="bfr:BF3452"/>
<dbReference type="PATRIC" id="fig|295405.11.peg.3317"/>
<dbReference type="HOGENOM" id="CLU_038816_6_0_10"/>
<dbReference type="OrthoDB" id="9766423at2"/>
<dbReference type="UniPathway" id="UPA00359">
    <property type="reaction ID" value="UER00482"/>
</dbReference>
<dbReference type="Proteomes" id="UP000002197">
    <property type="component" value="Chromosome"/>
</dbReference>
<dbReference type="GO" id="GO:0005886">
    <property type="term" value="C:plasma membrane"/>
    <property type="evidence" value="ECO:0007669"/>
    <property type="project" value="TreeGrafter"/>
</dbReference>
<dbReference type="GO" id="GO:0005524">
    <property type="term" value="F:ATP binding"/>
    <property type="evidence" value="ECO:0007669"/>
    <property type="project" value="UniProtKB-UniRule"/>
</dbReference>
<dbReference type="GO" id="GO:0009029">
    <property type="term" value="F:tetraacyldisaccharide 4'-kinase activity"/>
    <property type="evidence" value="ECO:0007669"/>
    <property type="project" value="UniProtKB-UniRule"/>
</dbReference>
<dbReference type="GO" id="GO:0009245">
    <property type="term" value="P:lipid A biosynthetic process"/>
    <property type="evidence" value="ECO:0007669"/>
    <property type="project" value="UniProtKB-UniRule"/>
</dbReference>
<dbReference type="GO" id="GO:0009244">
    <property type="term" value="P:lipopolysaccharide core region biosynthetic process"/>
    <property type="evidence" value="ECO:0007669"/>
    <property type="project" value="TreeGrafter"/>
</dbReference>
<dbReference type="HAMAP" id="MF_00409">
    <property type="entry name" value="LpxK"/>
    <property type="match status" value="1"/>
</dbReference>
<dbReference type="InterPro" id="IPR003758">
    <property type="entry name" value="LpxK"/>
</dbReference>
<dbReference type="InterPro" id="IPR027417">
    <property type="entry name" value="P-loop_NTPase"/>
</dbReference>
<dbReference type="NCBIfam" id="TIGR00682">
    <property type="entry name" value="lpxK"/>
    <property type="match status" value="1"/>
</dbReference>
<dbReference type="PANTHER" id="PTHR42724">
    <property type="entry name" value="TETRAACYLDISACCHARIDE 4'-KINASE"/>
    <property type="match status" value="1"/>
</dbReference>
<dbReference type="PANTHER" id="PTHR42724:SF1">
    <property type="entry name" value="TETRAACYLDISACCHARIDE 4'-KINASE, MITOCHONDRIAL-RELATED"/>
    <property type="match status" value="1"/>
</dbReference>
<dbReference type="Pfam" id="PF02606">
    <property type="entry name" value="LpxK"/>
    <property type="match status" value="1"/>
</dbReference>
<dbReference type="SUPFAM" id="SSF52540">
    <property type="entry name" value="P-loop containing nucleoside triphosphate hydrolases"/>
    <property type="match status" value="1"/>
</dbReference>
<accession>Q64QN6</accession>